<feature type="propeptide" id="PRO_0000026641" description="Removed in mature form" evidence="1">
    <location>
        <begin position="1"/>
        <end position="24"/>
    </location>
</feature>
<feature type="chain" id="PRO_0000026642" description="Probable proteasome subunit beta type-1">
    <location>
        <begin position="25"/>
        <end position="226"/>
    </location>
</feature>
<feature type="active site" description="Nucleophile" evidence="1">
    <location>
        <position position="25"/>
    </location>
</feature>
<accession>O43063</accession>
<comment type="function">
    <text evidence="1">The proteasome is a multicatalytic proteinase complex which is characterized by its ability to cleave peptides with Arg, Phe, Tyr, Leu, and Glu adjacent to the leaving group at neutral or slightly basic pH. The proteasome has an ATP-dependent proteolytic activity (By similarity).</text>
</comment>
<comment type="catalytic activity">
    <reaction>
        <text>Cleavage of peptide bonds with very broad specificity.</text>
        <dbReference type="EC" id="3.4.25.1"/>
    </reaction>
</comment>
<comment type="subunit">
    <text evidence="1">The 26S proteasome consists of a 20S proteasome core and two 19S regulatory subunits. The 20S proteasome core is composed of 28 subunits that are arranged in four stacked rings, resulting in a barrel-shaped structure. The two end rings are each formed by seven alpha subunits, and the two central rings are each formed by seven beta subunits. The catalytic chamber with the active sites is on the inside of the barrel (By similarity).</text>
</comment>
<comment type="subcellular location">
    <subcellularLocation>
        <location evidence="2 3">Cytoplasm</location>
    </subcellularLocation>
    <subcellularLocation>
        <location evidence="3">Nucleus</location>
    </subcellularLocation>
</comment>
<comment type="similarity">
    <text evidence="2">Belongs to the peptidase T1B family.</text>
</comment>
<reference key="1">
    <citation type="journal article" date="2002" name="Nature">
        <title>The genome sequence of Schizosaccharomyces pombe.</title>
        <authorList>
            <person name="Wood V."/>
            <person name="Gwilliam R."/>
            <person name="Rajandream M.A."/>
            <person name="Lyne M.H."/>
            <person name="Lyne R."/>
            <person name="Stewart A."/>
            <person name="Sgouros J.G."/>
            <person name="Peat N."/>
            <person name="Hayles J."/>
            <person name="Baker S.G."/>
            <person name="Basham D."/>
            <person name="Bowman S."/>
            <person name="Brooks K."/>
            <person name="Brown D."/>
            <person name="Brown S."/>
            <person name="Chillingworth T."/>
            <person name="Churcher C.M."/>
            <person name="Collins M."/>
            <person name="Connor R."/>
            <person name="Cronin A."/>
            <person name="Davis P."/>
            <person name="Feltwell T."/>
            <person name="Fraser A."/>
            <person name="Gentles S."/>
            <person name="Goble A."/>
            <person name="Hamlin N."/>
            <person name="Harris D.E."/>
            <person name="Hidalgo J."/>
            <person name="Hodgson G."/>
            <person name="Holroyd S."/>
            <person name="Hornsby T."/>
            <person name="Howarth S."/>
            <person name="Huckle E.J."/>
            <person name="Hunt S."/>
            <person name="Jagels K."/>
            <person name="James K.D."/>
            <person name="Jones L."/>
            <person name="Jones M."/>
            <person name="Leather S."/>
            <person name="McDonald S."/>
            <person name="McLean J."/>
            <person name="Mooney P."/>
            <person name="Moule S."/>
            <person name="Mungall K.L."/>
            <person name="Murphy L.D."/>
            <person name="Niblett D."/>
            <person name="Odell C."/>
            <person name="Oliver K."/>
            <person name="O'Neil S."/>
            <person name="Pearson D."/>
            <person name="Quail M.A."/>
            <person name="Rabbinowitsch E."/>
            <person name="Rutherford K.M."/>
            <person name="Rutter S."/>
            <person name="Saunders D."/>
            <person name="Seeger K."/>
            <person name="Sharp S."/>
            <person name="Skelton J."/>
            <person name="Simmonds M.N."/>
            <person name="Squares R."/>
            <person name="Squares S."/>
            <person name="Stevens K."/>
            <person name="Taylor K."/>
            <person name="Taylor R.G."/>
            <person name="Tivey A."/>
            <person name="Walsh S.V."/>
            <person name="Warren T."/>
            <person name="Whitehead S."/>
            <person name="Woodward J.R."/>
            <person name="Volckaert G."/>
            <person name="Aert R."/>
            <person name="Robben J."/>
            <person name="Grymonprez B."/>
            <person name="Weltjens I."/>
            <person name="Vanstreels E."/>
            <person name="Rieger M."/>
            <person name="Schaefer M."/>
            <person name="Mueller-Auer S."/>
            <person name="Gabel C."/>
            <person name="Fuchs M."/>
            <person name="Duesterhoeft A."/>
            <person name="Fritzc C."/>
            <person name="Holzer E."/>
            <person name="Moestl D."/>
            <person name="Hilbert H."/>
            <person name="Borzym K."/>
            <person name="Langer I."/>
            <person name="Beck A."/>
            <person name="Lehrach H."/>
            <person name="Reinhardt R."/>
            <person name="Pohl T.M."/>
            <person name="Eger P."/>
            <person name="Zimmermann W."/>
            <person name="Wedler H."/>
            <person name="Wambutt R."/>
            <person name="Purnelle B."/>
            <person name="Goffeau A."/>
            <person name="Cadieu E."/>
            <person name="Dreano S."/>
            <person name="Gloux S."/>
            <person name="Lelaure V."/>
            <person name="Mottier S."/>
            <person name="Galibert F."/>
            <person name="Aves S.J."/>
            <person name="Xiang Z."/>
            <person name="Hunt C."/>
            <person name="Moore K."/>
            <person name="Hurst S.M."/>
            <person name="Lucas M."/>
            <person name="Rochet M."/>
            <person name="Gaillardin C."/>
            <person name="Tallada V.A."/>
            <person name="Garzon A."/>
            <person name="Thode G."/>
            <person name="Daga R.R."/>
            <person name="Cruzado L."/>
            <person name="Jimenez J."/>
            <person name="Sanchez M."/>
            <person name="del Rey F."/>
            <person name="Benito J."/>
            <person name="Dominguez A."/>
            <person name="Revuelta J.L."/>
            <person name="Moreno S."/>
            <person name="Armstrong J."/>
            <person name="Forsburg S.L."/>
            <person name="Cerutti L."/>
            <person name="Lowe T."/>
            <person name="McCombie W.R."/>
            <person name="Paulsen I."/>
            <person name="Potashkin J."/>
            <person name="Shpakovski G.V."/>
            <person name="Ussery D."/>
            <person name="Barrell B.G."/>
            <person name="Nurse P."/>
        </authorList>
    </citation>
    <scope>NUCLEOTIDE SEQUENCE [LARGE SCALE GENOMIC DNA]</scope>
    <source>
        <strain>972 / ATCC 24843</strain>
    </source>
</reference>
<reference key="2">
    <citation type="journal article" date="2006" name="Nat. Biotechnol.">
        <title>ORFeome cloning and global analysis of protein localization in the fission yeast Schizosaccharomyces pombe.</title>
        <authorList>
            <person name="Matsuyama A."/>
            <person name="Arai R."/>
            <person name="Yashiroda Y."/>
            <person name="Shirai A."/>
            <person name="Kamata A."/>
            <person name="Sekido S."/>
            <person name="Kobayashi Y."/>
            <person name="Hashimoto A."/>
            <person name="Hamamoto M."/>
            <person name="Hiraoka Y."/>
            <person name="Horinouchi S."/>
            <person name="Yoshida M."/>
        </authorList>
    </citation>
    <scope>SUBCELLULAR LOCATION [LARGE SCALE ANALYSIS]</scope>
</reference>
<protein>
    <recommendedName>
        <fullName>Probable proteasome subunit beta type-1</fullName>
        <ecNumber>3.4.25.1</ecNumber>
    </recommendedName>
</protein>
<evidence type="ECO:0000250" key="1"/>
<evidence type="ECO:0000255" key="2">
    <source>
        <dbReference type="PROSITE-ProRule" id="PRU00809"/>
    </source>
</evidence>
<evidence type="ECO:0000269" key="3">
    <source>
    </source>
</evidence>
<gene>
    <name type="primary">pre3</name>
    <name type="ORF">SPBC4C3.10c</name>
</gene>
<proteinExistence type="inferred from homology"/>
<keyword id="KW-0963">Cytoplasm</keyword>
<keyword id="KW-0378">Hydrolase</keyword>
<keyword id="KW-0539">Nucleus</keyword>
<keyword id="KW-0645">Protease</keyword>
<keyword id="KW-0647">Proteasome</keyword>
<keyword id="KW-1185">Reference proteome</keyword>
<keyword id="KW-0888">Threonine protease</keyword>
<keyword id="KW-0865">Zymogen</keyword>
<sequence length="226" mass="24564">MATTVKDTMNVDINAIKKGEIRMGTTITALRYKDGVILAADSRTTMGAYIANRVTDKLTQLTDNIWCCRSGSAADTQTVADLLKYYLSMYRIQFGHDPSVHTAATLASEMCYQNKNMLSAGLIVAGYDEKTGGDVYSIPLGGSLHKQPLAIGGSGSAFIYGFCDANFRENMTQEEAVEFLKNAVALAMERDGSSGGTIRMVILNKDGMERKFFAIDTANPIPVFTH</sequence>
<organism>
    <name type="scientific">Schizosaccharomyces pombe (strain 972 / ATCC 24843)</name>
    <name type="common">Fission yeast</name>
    <dbReference type="NCBI Taxonomy" id="284812"/>
    <lineage>
        <taxon>Eukaryota</taxon>
        <taxon>Fungi</taxon>
        <taxon>Dikarya</taxon>
        <taxon>Ascomycota</taxon>
        <taxon>Taphrinomycotina</taxon>
        <taxon>Schizosaccharomycetes</taxon>
        <taxon>Schizosaccharomycetales</taxon>
        <taxon>Schizosaccharomycetaceae</taxon>
        <taxon>Schizosaccharomyces</taxon>
    </lineage>
</organism>
<dbReference type="EC" id="3.4.25.1"/>
<dbReference type="EMBL" id="CU329671">
    <property type="protein sequence ID" value="CAA16832.1"/>
    <property type="molecule type" value="Genomic_DNA"/>
</dbReference>
<dbReference type="PIR" id="T40487">
    <property type="entry name" value="T40487"/>
</dbReference>
<dbReference type="RefSeq" id="NP_596295.1">
    <property type="nucleotide sequence ID" value="NM_001022216.2"/>
</dbReference>
<dbReference type="SMR" id="O43063"/>
<dbReference type="BioGRID" id="277395">
    <property type="interactions" value="7"/>
</dbReference>
<dbReference type="ComplexPortal" id="CPX-9077">
    <property type="entry name" value="26S proteasome complex"/>
</dbReference>
<dbReference type="FunCoup" id="O43063">
    <property type="interactions" value="486"/>
</dbReference>
<dbReference type="STRING" id="284812.O43063"/>
<dbReference type="MEROPS" id="T01.010"/>
<dbReference type="iPTMnet" id="O43063"/>
<dbReference type="PaxDb" id="4896-SPBC4C3.10c.1"/>
<dbReference type="EnsemblFungi" id="SPBC4C3.10c.1">
    <property type="protein sequence ID" value="SPBC4C3.10c.1:pep"/>
    <property type="gene ID" value="SPBC4C3.10c"/>
</dbReference>
<dbReference type="GeneID" id="2540878"/>
<dbReference type="KEGG" id="spo:2540878"/>
<dbReference type="PomBase" id="SPBC4C3.10c">
    <property type="gene designation" value="pre3"/>
</dbReference>
<dbReference type="VEuPathDB" id="FungiDB:SPBC4C3.10c"/>
<dbReference type="eggNOG" id="KOG0174">
    <property type="taxonomic scope" value="Eukaryota"/>
</dbReference>
<dbReference type="HOGENOM" id="CLU_035750_5_2_1"/>
<dbReference type="InParanoid" id="O43063"/>
<dbReference type="OMA" id="TFIYGYC"/>
<dbReference type="PhylomeDB" id="O43063"/>
<dbReference type="Reactome" id="R-SPO-1236978">
    <property type="pathway name" value="Cross-presentation of soluble exogenous antigens (endosomes)"/>
</dbReference>
<dbReference type="Reactome" id="R-SPO-350562">
    <property type="pathway name" value="Regulation of ornithine decarboxylase (ODC)"/>
</dbReference>
<dbReference type="Reactome" id="R-SPO-5687128">
    <property type="pathway name" value="MAPK6/MAPK4 signaling"/>
</dbReference>
<dbReference type="Reactome" id="R-SPO-5689603">
    <property type="pathway name" value="UCH proteinases"/>
</dbReference>
<dbReference type="Reactome" id="R-SPO-5689880">
    <property type="pathway name" value="Ub-specific processing proteases"/>
</dbReference>
<dbReference type="Reactome" id="R-SPO-68949">
    <property type="pathway name" value="Orc1 removal from chromatin"/>
</dbReference>
<dbReference type="Reactome" id="R-SPO-69017">
    <property type="pathway name" value="CDK-mediated phosphorylation and removal of Cdc6"/>
</dbReference>
<dbReference type="Reactome" id="R-SPO-69601">
    <property type="pathway name" value="Ubiquitin Mediated Degradation of Phosphorylated Cdc25A"/>
</dbReference>
<dbReference type="Reactome" id="R-SPO-75815">
    <property type="pathway name" value="Ubiquitin-dependent degradation of Cyclin D"/>
</dbReference>
<dbReference type="Reactome" id="R-SPO-8854050">
    <property type="pathway name" value="FBXL7 down-regulates AURKA during mitotic entry and in early mitosis"/>
</dbReference>
<dbReference type="Reactome" id="R-SPO-8948751">
    <property type="pathway name" value="Regulation of PTEN stability and activity"/>
</dbReference>
<dbReference type="Reactome" id="R-SPO-8951664">
    <property type="pathway name" value="Neddylation"/>
</dbReference>
<dbReference type="Reactome" id="R-SPO-9755511">
    <property type="pathway name" value="KEAP1-NFE2L2 pathway"/>
</dbReference>
<dbReference type="Reactome" id="R-SPO-983168">
    <property type="pathway name" value="Antigen processing: Ubiquitination &amp; Proteasome degradation"/>
</dbReference>
<dbReference type="Reactome" id="R-SPO-9907900">
    <property type="pathway name" value="Proteasome assembly"/>
</dbReference>
<dbReference type="PRO" id="PR:O43063"/>
<dbReference type="Proteomes" id="UP000002485">
    <property type="component" value="Chromosome II"/>
</dbReference>
<dbReference type="GO" id="GO:0005829">
    <property type="term" value="C:cytosol"/>
    <property type="evidence" value="ECO:0007005"/>
    <property type="project" value="PomBase"/>
</dbReference>
<dbReference type="GO" id="GO:0005634">
    <property type="term" value="C:nucleus"/>
    <property type="evidence" value="ECO:0007005"/>
    <property type="project" value="PomBase"/>
</dbReference>
<dbReference type="GO" id="GO:0019774">
    <property type="term" value="C:proteasome core complex, beta-subunit complex"/>
    <property type="evidence" value="ECO:0000314"/>
    <property type="project" value="PomBase"/>
</dbReference>
<dbReference type="GO" id="GO:0004175">
    <property type="term" value="F:endopeptidase activity"/>
    <property type="evidence" value="ECO:0000318"/>
    <property type="project" value="GO_Central"/>
</dbReference>
<dbReference type="GO" id="GO:0004298">
    <property type="term" value="F:threonine-type endopeptidase activity"/>
    <property type="evidence" value="ECO:0007669"/>
    <property type="project" value="UniProtKB-KW"/>
</dbReference>
<dbReference type="GO" id="GO:0043161">
    <property type="term" value="P:proteasome-mediated ubiquitin-dependent protein catabolic process"/>
    <property type="evidence" value="ECO:0000318"/>
    <property type="project" value="GO_Central"/>
</dbReference>
<dbReference type="CDD" id="cd03762">
    <property type="entry name" value="proteasome_beta_type_6"/>
    <property type="match status" value="1"/>
</dbReference>
<dbReference type="FunFam" id="3.60.20.10:FF:000010">
    <property type="entry name" value="Proteasome subunit beta type-1"/>
    <property type="match status" value="1"/>
</dbReference>
<dbReference type="Gene3D" id="3.60.20.10">
    <property type="entry name" value="Glutamine Phosphoribosylpyrophosphate, subunit 1, domain 1"/>
    <property type="match status" value="1"/>
</dbReference>
<dbReference type="InterPro" id="IPR029055">
    <property type="entry name" value="Ntn_hydrolases_N"/>
</dbReference>
<dbReference type="InterPro" id="IPR000243">
    <property type="entry name" value="Pept_T1A_subB"/>
</dbReference>
<dbReference type="InterPro" id="IPR016050">
    <property type="entry name" value="Proteasome_bsu_CS"/>
</dbReference>
<dbReference type="InterPro" id="IPR001353">
    <property type="entry name" value="Proteasome_sua/b"/>
</dbReference>
<dbReference type="InterPro" id="IPR023333">
    <property type="entry name" value="Proteasome_suB-type"/>
</dbReference>
<dbReference type="PANTHER" id="PTHR32194:SF0">
    <property type="entry name" value="ATP-DEPENDENT PROTEASE SUBUNIT HSLV"/>
    <property type="match status" value="1"/>
</dbReference>
<dbReference type="PANTHER" id="PTHR32194">
    <property type="entry name" value="METALLOPROTEASE TLDD"/>
    <property type="match status" value="1"/>
</dbReference>
<dbReference type="Pfam" id="PF00227">
    <property type="entry name" value="Proteasome"/>
    <property type="match status" value="1"/>
</dbReference>
<dbReference type="PRINTS" id="PR00141">
    <property type="entry name" value="PROTEASOME"/>
</dbReference>
<dbReference type="SUPFAM" id="SSF56235">
    <property type="entry name" value="N-terminal nucleophile aminohydrolases (Ntn hydrolases)"/>
    <property type="match status" value="1"/>
</dbReference>
<dbReference type="PROSITE" id="PS00854">
    <property type="entry name" value="PROTEASOME_BETA_1"/>
    <property type="match status" value="1"/>
</dbReference>
<dbReference type="PROSITE" id="PS51476">
    <property type="entry name" value="PROTEASOME_BETA_2"/>
    <property type="match status" value="1"/>
</dbReference>
<name>PSB1_SCHPO</name>